<evidence type="ECO:0000250" key="1">
    <source>
        <dbReference type="UniProtKB" id="O14684"/>
    </source>
</evidence>
<evidence type="ECO:0000250" key="2">
    <source>
        <dbReference type="UniProtKB" id="Q9JM51"/>
    </source>
</evidence>
<evidence type="ECO:0000305" key="3"/>
<protein>
    <recommendedName>
        <fullName>Prostaglandin E synthase</fullName>
        <ecNumber evidence="1">5.3.99.3</ecNumber>
    </recommendedName>
    <alternativeName>
        <fullName>Glutathione peroxidase PTGES</fullName>
        <ecNumber evidence="1">1.11.1.-</ecNumber>
    </alternativeName>
    <alternativeName>
        <fullName>Glutathione transferase PTGES</fullName>
        <ecNumber evidence="1">2.5.1.18</ecNumber>
    </alternativeName>
    <alternativeName>
        <fullName>Microsomal prostaglandin E synthase 1</fullName>
        <shortName>MPGES-1</shortName>
    </alternativeName>
</protein>
<gene>
    <name type="primary">PTGES</name>
</gene>
<proteinExistence type="evidence at transcript level"/>
<accession>Q8HZJ2</accession>
<sequence length="153" mass="17172">MPPPSLAMVSGQALPAFLLCSTLLVIKMYAVAVITGQVRLRKKAFANPEDALRHGGLQFHRDDQDVERCLRAHRNDMETIYPFLFLGLVYSFLGPDPFVAQMHFLVFFLGRMVHTVAYLGKLRAPTRSLAYTVAQLPCASMALQIVWEAARHL</sequence>
<feature type="chain" id="PRO_0000217744" description="Prostaglandin E synthase">
    <location>
        <begin position="1"/>
        <end position="153"/>
    </location>
</feature>
<feature type="topological domain" description="Lumenal" evidence="1">
    <location>
        <begin position="1"/>
        <end position="13"/>
    </location>
</feature>
<feature type="transmembrane region" description="Helical" evidence="1">
    <location>
        <begin position="14"/>
        <end position="42"/>
    </location>
</feature>
<feature type="topological domain" description="Cytoplasmic" evidence="1">
    <location>
        <begin position="43"/>
        <end position="61"/>
    </location>
</feature>
<feature type="transmembrane region" description="Helical" evidence="1">
    <location>
        <begin position="62"/>
        <end position="91"/>
    </location>
</feature>
<feature type="topological domain" description="Lumenal" evidence="1">
    <location>
        <begin position="92"/>
        <end position="96"/>
    </location>
</feature>
<feature type="transmembrane region" description="Helical" evidence="1">
    <location>
        <begin position="97"/>
        <end position="120"/>
    </location>
</feature>
<feature type="topological domain" description="Cytoplasmic" evidence="1">
    <location>
        <begin position="121"/>
        <end position="124"/>
    </location>
</feature>
<feature type="transmembrane region" description="Helical" evidence="1">
    <location>
        <begin position="125"/>
        <end position="153"/>
    </location>
</feature>
<feature type="binding site" evidence="1">
    <location>
        <position position="39"/>
    </location>
    <ligand>
        <name>glutathione</name>
        <dbReference type="ChEBI" id="CHEBI:57925"/>
    </ligand>
</feature>
<feature type="binding site" evidence="1">
    <location>
        <begin position="74"/>
        <end position="78"/>
    </location>
    <ligand>
        <name>glutathione</name>
        <dbReference type="ChEBI" id="CHEBI:57925"/>
    </ligand>
</feature>
<feature type="binding site" evidence="1">
    <location>
        <position position="114"/>
    </location>
    <ligand>
        <name>glutathione</name>
        <dbReference type="ChEBI" id="CHEBI:57925"/>
    </ligand>
</feature>
<feature type="binding site" evidence="1">
    <location>
        <position position="118"/>
    </location>
    <ligand>
        <name>glutathione</name>
        <dbReference type="ChEBI" id="CHEBI:57925"/>
    </ligand>
</feature>
<feature type="binding site" evidence="1">
    <location>
        <begin position="127"/>
        <end position="131"/>
    </location>
    <ligand>
        <name>glutathione</name>
        <dbReference type="ChEBI" id="CHEBI:57925"/>
    </ligand>
</feature>
<feature type="site" description="Essential for protaglandin-E synthase activity" evidence="1">
    <location>
        <position position="50"/>
    </location>
</feature>
<feature type="site" description="Essential for protaglandin-E synthase activity" evidence="1">
    <location>
        <position position="127"/>
    </location>
</feature>
<keyword id="KW-0963">Cytoplasm</keyword>
<keyword id="KW-0275">Fatty acid biosynthesis</keyword>
<keyword id="KW-0276">Fatty acid metabolism</keyword>
<keyword id="KW-0413">Isomerase</keyword>
<keyword id="KW-0444">Lipid biosynthesis</keyword>
<keyword id="KW-0443">Lipid metabolism</keyword>
<keyword id="KW-0472">Membrane</keyword>
<keyword id="KW-0560">Oxidoreductase</keyword>
<keyword id="KW-0643">Prostaglandin biosynthesis</keyword>
<keyword id="KW-0644">Prostaglandin metabolism</keyword>
<keyword id="KW-1185">Reference proteome</keyword>
<keyword id="KW-0808">Transferase</keyword>
<keyword id="KW-0812">Transmembrane</keyword>
<keyword id="KW-1133">Transmembrane helix</keyword>
<dbReference type="EC" id="5.3.99.3" evidence="1"/>
<dbReference type="EC" id="1.11.1.-" evidence="1"/>
<dbReference type="EC" id="2.5.1.18" evidence="1"/>
<dbReference type="EMBL" id="AY057096">
    <property type="protein sequence ID" value="AAL18255.1"/>
    <property type="molecule type" value="mRNA"/>
</dbReference>
<dbReference type="RefSeq" id="NP_001075404.1">
    <property type="nucleotide sequence ID" value="NM_001081935.2"/>
</dbReference>
<dbReference type="RefSeq" id="XP_014591354.1">
    <property type="nucleotide sequence ID" value="XM_014735868.1"/>
</dbReference>
<dbReference type="RefSeq" id="XP_014591355.1">
    <property type="nucleotide sequence ID" value="XM_014735869.1"/>
</dbReference>
<dbReference type="RefSeq" id="XP_023484371.1">
    <property type="nucleotide sequence ID" value="XM_023628603.2"/>
</dbReference>
<dbReference type="RefSeq" id="XP_070106460.1">
    <property type="nucleotide sequence ID" value="XM_070250359.1"/>
</dbReference>
<dbReference type="RefSeq" id="XP_070106461.1">
    <property type="nucleotide sequence ID" value="XM_070250360.1"/>
</dbReference>
<dbReference type="RefSeq" id="XP_070106462.1">
    <property type="nucleotide sequence ID" value="XM_070250361.1"/>
</dbReference>
<dbReference type="RefSeq" id="XP_070106463.1">
    <property type="nucleotide sequence ID" value="XM_070250362.1"/>
</dbReference>
<dbReference type="RefSeq" id="XP_070106466.1">
    <property type="nucleotide sequence ID" value="XM_070250365.1"/>
</dbReference>
<dbReference type="SMR" id="Q8HZJ2"/>
<dbReference type="FunCoup" id="Q8HZJ2">
    <property type="interactions" value="22"/>
</dbReference>
<dbReference type="STRING" id="9796.ENSECAP00000001029"/>
<dbReference type="PaxDb" id="9796-ENSECAP00000001029"/>
<dbReference type="GeneID" id="100034143"/>
<dbReference type="KEGG" id="ecb:100034143"/>
<dbReference type="CTD" id="9536"/>
<dbReference type="InParanoid" id="Q8HZJ2"/>
<dbReference type="OMA" id="TIAQIPC"/>
<dbReference type="OrthoDB" id="193139at2759"/>
<dbReference type="UniPathway" id="UPA00662"/>
<dbReference type="Proteomes" id="UP000002281">
    <property type="component" value="Chromosome 25"/>
</dbReference>
<dbReference type="Bgee" id="ENSECAG00000000943">
    <property type="expression patterns" value="Expressed in chorionic villus and 20 other cell types or tissues"/>
</dbReference>
<dbReference type="GO" id="GO:0016020">
    <property type="term" value="C:membrane"/>
    <property type="evidence" value="ECO:0000250"/>
    <property type="project" value="UniProtKB"/>
</dbReference>
<dbReference type="GO" id="GO:0048471">
    <property type="term" value="C:perinuclear region of cytoplasm"/>
    <property type="evidence" value="ECO:0007669"/>
    <property type="project" value="UniProtKB-SubCell"/>
</dbReference>
<dbReference type="GO" id="GO:0043295">
    <property type="term" value="F:glutathione binding"/>
    <property type="evidence" value="ECO:0000250"/>
    <property type="project" value="UniProtKB"/>
</dbReference>
<dbReference type="GO" id="GO:0004602">
    <property type="term" value="F:glutathione peroxidase activity"/>
    <property type="evidence" value="ECO:0000250"/>
    <property type="project" value="UniProtKB"/>
</dbReference>
<dbReference type="GO" id="GO:0004364">
    <property type="term" value="F:glutathione transferase activity"/>
    <property type="evidence" value="ECO:0000250"/>
    <property type="project" value="UniProtKB"/>
</dbReference>
<dbReference type="GO" id="GO:0050220">
    <property type="term" value="F:prostaglandin-E synthase activity"/>
    <property type="evidence" value="ECO:0000250"/>
    <property type="project" value="UniProtKB"/>
</dbReference>
<dbReference type="GO" id="GO:0001516">
    <property type="term" value="P:prostaglandin biosynthetic process"/>
    <property type="evidence" value="ECO:0000250"/>
    <property type="project" value="UniProtKB"/>
</dbReference>
<dbReference type="GO" id="GO:0050727">
    <property type="term" value="P:regulation of inflammatory response"/>
    <property type="evidence" value="ECO:0000250"/>
    <property type="project" value="UniProtKB"/>
</dbReference>
<dbReference type="FunFam" id="1.20.120.550:FF:000002">
    <property type="entry name" value="Microsomal glutathione S-transferase 1"/>
    <property type="match status" value="1"/>
</dbReference>
<dbReference type="Gene3D" id="1.20.120.550">
    <property type="entry name" value="Membrane associated eicosanoid/glutathione metabolism-like domain"/>
    <property type="match status" value="1"/>
</dbReference>
<dbReference type="InterPro" id="IPR023352">
    <property type="entry name" value="MAPEG-like_dom_sf"/>
</dbReference>
<dbReference type="InterPro" id="IPR001129">
    <property type="entry name" value="Membr-assoc_MAPEG"/>
</dbReference>
<dbReference type="InterPro" id="IPR040162">
    <property type="entry name" value="MGST1-like"/>
</dbReference>
<dbReference type="PANTHER" id="PTHR10689">
    <property type="entry name" value="MICROSOMAL GLUTATHIONE S-TRANSFERASE 1"/>
    <property type="match status" value="1"/>
</dbReference>
<dbReference type="PANTHER" id="PTHR10689:SF9">
    <property type="entry name" value="PROSTAGLANDIN E SYNTHASE"/>
    <property type="match status" value="1"/>
</dbReference>
<dbReference type="Pfam" id="PF01124">
    <property type="entry name" value="MAPEG"/>
    <property type="match status" value="1"/>
</dbReference>
<dbReference type="SUPFAM" id="SSF161084">
    <property type="entry name" value="MAPEG domain-like"/>
    <property type="match status" value="1"/>
</dbReference>
<name>PTGES_HORSE</name>
<comment type="function">
    <text evidence="1 2">Terminal enzyme of the cyclooxygenase (COX)-2-mediated prostaglandin E2 (PGE2) biosynthetic pathway. Catalyzes the glutathione-dependent oxidoreduction of prostaglandin endoperoxide H2 (PGH2) to prostaglandin E2 (PGE2) in response to inflammatory stimuli (By similarity). Plays a key role in inflammation response, fever and pain (By similarity). Also catalyzes the oxidoreduction of endocannabinoids into prostaglandin glycerol esters and PGG2 into 15-hydroperoxy-PGE2. In addition, displays low glutathione transferase and glutathione-dependent peroxidase activities, toward 1-chloro-2,4-dinitrobenzene and 5-hydroperoxyicosatetraenoic acid (5-HPETE), respectively (By similarity).</text>
</comment>
<comment type="catalytic activity">
    <reaction evidence="1">
        <text>prostaglandin H2 = prostaglandin E2</text>
        <dbReference type="Rhea" id="RHEA:12893"/>
        <dbReference type="ChEBI" id="CHEBI:57405"/>
        <dbReference type="ChEBI" id="CHEBI:606564"/>
        <dbReference type="EC" id="5.3.99.3"/>
    </reaction>
    <physiologicalReaction direction="left-to-right" evidence="1">
        <dbReference type="Rhea" id="RHEA:12894"/>
    </physiologicalReaction>
</comment>
<comment type="catalytic activity">
    <reaction evidence="1">
        <text>2-glyceryl-prostaglandin H2 = 2-glyceryl-prostaglandin E2</text>
        <dbReference type="Rhea" id="RHEA:53324"/>
        <dbReference type="ChEBI" id="CHEBI:85166"/>
        <dbReference type="ChEBI" id="CHEBI:137172"/>
    </reaction>
    <physiologicalReaction direction="left-to-right" evidence="1">
        <dbReference type="Rhea" id="RHEA:53325"/>
    </physiologicalReaction>
</comment>
<comment type="catalytic activity">
    <reaction evidence="1">
        <text>prostaglandin G2 = (15S)-15-hydroperoxy-prostaglandin E2</text>
        <dbReference type="Rhea" id="RHEA:64364"/>
        <dbReference type="ChEBI" id="CHEBI:82629"/>
        <dbReference type="ChEBI" id="CHEBI:152564"/>
    </reaction>
    <physiologicalReaction direction="left-to-right" evidence="1">
        <dbReference type="Rhea" id="RHEA:64365"/>
    </physiologicalReaction>
</comment>
<comment type="catalytic activity">
    <reaction evidence="1">
        <text>1-chloro-2,4-dinitrobenzene + glutathione = 2,4-dinitrophenyl-S-glutathione + chloride + H(+)</text>
        <dbReference type="Rhea" id="RHEA:51220"/>
        <dbReference type="ChEBI" id="CHEBI:15378"/>
        <dbReference type="ChEBI" id="CHEBI:17996"/>
        <dbReference type="ChEBI" id="CHEBI:34718"/>
        <dbReference type="ChEBI" id="CHEBI:57925"/>
        <dbReference type="ChEBI" id="CHEBI:133977"/>
        <dbReference type="EC" id="2.5.1.18"/>
    </reaction>
</comment>
<comment type="catalytic activity">
    <reaction evidence="1">
        <text>(5S)-hydroperoxy-(6E,8Z,11Z,14Z)-eicosatetraenoate + 2 glutathione = (5S)-hydroxy-(6E,8Z,11Z,14Z)-eicosatetraenoate + glutathione disulfide + H2O</text>
        <dbReference type="Rhea" id="RHEA:48620"/>
        <dbReference type="ChEBI" id="CHEBI:15377"/>
        <dbReference type="ChEBI" id="CHEBI:57450"/>
        <dbReference type="ChEBI" id="CHEBI:57925"/>
        <dbReference type="ChEBI" id="CHEBI:58297"/>
        <dbReference type="ChEBI" id="CHEBI:90632"/>
    </reaction>
</comment>
<comment type="cofactor">
    <cofactor evidence="1">
        <name>glutathione</name>
        <dbReference type="ChEBI" id="CHEBI:57925"/>
    </cofactor>
</comment>
<comment type="pathway">
    <text evidence="1">Lipid metabolism; prostaglandin biosynthesis.</text>
</comment>
<comment type="subunit">
    <text evidence="1">Homotrimer.</text>
</comment>
<comment type="subcellular location">
    <subcellularLocation>
        <location evidence="1">Membrane</location>
        <topology evidence="1">Multi-pass membrane protein</topology>
    </subcellularLocation>
    <subcellularLocation>
        <location evidence="1">Cytoplasm</location>
        <location evidence="1">Perinuclear region</location>
    </subcellularLocation>
    <text evidence="1">Colocalizes with PTGS1/COX-1 and PTGS2/COX-2 in the perinuclear compartment.</text>
</comment>
<comment type="similarity">
    <text evidence="3">Belongs to the MAPEG family.</text>
</comment>
<organism>
    <name type="scientific">Equus caballus</name>
    <name type="common">Horse</name>
    <dbReference type="NCBI Taxonomy" id="9796"/>
    <lineage>
        <taxon>Eukaryota</taxon>
        <taxon>Metazoa</taxon>
        <taxon>Chordata</taxon>
        <taxon>Craniata</taxon>
        <taxon>Vertebrata</taxon>
        <taxon>Euteleostomi</taxon>
        <taxon>Mammalia</taxon>
        <taxon>Eutheria</taxon>
        <taxon>Laurasiatheria</taxon>
        <taxon>Perissodactyla</taxon>
        <taxon>Equidae</taxon>
        <taxon>Equus</taxon>
    </lineage>
</organism>
<reference key="1">
    <citation type="submission" date="2001-09" db="EMBL/GenBank/DDBJ databases">
        <title>Characterization of equine prostaglandin E synthase.</title>
        <authorList>
            <person name="Sirois J."/>
            <person name="Bouchard N."/>
            <person name="Filion F."/>
        </authorList>
    </citation>
    <scope>NUCLEOTIDE SEQUENCE [MRNA]</scope>
</reference>